<accession>A3M9W5</accession>
<dbReference type="EC" id="5.4.2.10" evidence="1"/>
<dbReference type="EMBL" id="CP000521">
    <property type="protein sequence ID" value="ABO13709.2"/>
    <property type="molecule type" value="Genomic_DNA"/>
</dbReference>
<dbReference type="RefSeq" id="WP_000119868.1">
    <property type="nucleotide sequence ID" value="NZ_CP053098.1"/>
</dbReference>
<dbReference type="SMR" id="A3M9W5"/>
<dbReference type="KEGG" id="acb:A1S_3320"/>
<dbReference type="HOGENOM" id="CLU_016950_7_0_6"/>
<dbReference type="GO" id="GO:0005829">
    <property type="term" value="C:cytosol"/>
    <property type="evidence" value="ECO:0007669"/>
    <property type="project" value="TreeGrafter"/>
</dbReference>
<dbReference type="GO" id="GO:0000287">
    <property type="term" value="F:magnesium ion binding"/>
    <property type="evidence" value="ECO:0007669"/>
    <property type="project" value="UniProtKB-UniRule"/>
</dbReference>
<dbReference type="GO" id="GO:0008966">
    <property type="term" value="F:phosphoglucosamine mutase activity"/>
    <property type="evidence" value="ECO:0007669"/>
    <property type="project" value="UniProtKB-UniRule"/>
</dbReference>
<dbReference type="GO" id="GO:0004615">
    <property type="term" value="F:phosphomannomutase activity"/>
    <property type="evidence" value="ECO:0007669"/>
    <property type="project" value="TreeGrafter"/>
</dbReference>
<dbReference type="GO" id="GO:0005975">
    <property type="term" value="P:carbohydrate metabolic process"/>
    <property type="evidence" value="ECO:0007669"/>
    <property type="project" value="InterPro"/>
</dbReference>
<dbReference type="GO" id="GO:0009252">
    <property type="term" value="P:peptidoglycan biosynthetic process"/>
    <property type="evidence" value="ECO:0007669"/>
    <property type="project" value="TreeGrafter"/>
</dbReference>
<dbReference type="GO" id="GO:0006048">
    <property type="term" value="P:UDP-N-acetylglucosamine biosynthetic process"/>
    <property type="evidence" value="ECO:0007669"/>
    <property type="project" value="TreeGrafter"/>
</dbReference>
<dbReference type="CDD" id="cd05802">
    <property type="entry name" value="GlmM"/>
    <property type="match status" value="1"/>
</dbReference>
<dbReference type="FunFam" id="3.30.310.50:FF:000001">
    <property type="entry name" value="Phosphoglucosamine mutase"/>
    <property type="match status" value="1"/>
</dbReference>
<dbReference type="FunFam" id="3.40.120.10:FF:000001">
    <property type="entry name" value="Phosphoglucosamine mutase"/>
    <property type="match status" value="1"/>
</dbReference>
<dbReference type="FunFam" id="3.40.120.10:FF:000003">
    <property type="entry name" value="Phosphoglucosamine mutase"/>
    <property type="match status" value="1"/>
</dbReference>
<dbReference type="Gene3D" id="3.40.120.10">
    <property type="entry name" value="Alpha-D-Glucose-1,6-Bisphosphate, subunit A, domain 3"/>
    <property type="match status" value="3"/>
</dbReference>
<dbReference type="Gene3D" id="3.30.310.50">
    <property type="entry name" value="Alpha-D-phosphohexomutase, C-terminal domain"/>
    <property type="match status" value="1"/>
</dbReference>
<dbReference type="HAMAP" id="MF_01554_B">
    <property type="entry name" value="GlmM_B"/>
    <property type="match status" value="1"/>
</dbReference>
<dbReference type="InterPro" id="IPR005844">
    <property type="entry name" value="A-D-PHexomutase_a/b/a-I"/>
</dbReference>
<dbReference type="InterPro" id="IPR016055">
    <property type="entry name" value="A-D-PHexomutase_a/b/a-I/II/III"/>
</dbReference>
<dbReference type="InterPro" id="IPR005845">
    <property type="entry name" value="A-D-PHexomutase_a/b/a-II"/>
</dbReference>
<dbReference type="InterPro" id="IPR005846">
    <property type="entry name" value="A-D-PHexomutase_a/b/a-III"/>
</dbReference>
<dbReference type="InterPro" id="IPR005843">
    <property type="entry name" value="A-D-PHexomutase_C"/>
</dbReference>
<dbReference type="InterPro" id="IPR036900">
    <property type="entry name" value="A-D-PHexomutase_C_sf"/>
</dbReference>
<dbReference type="InterPro" id="IPR016066">
    <property type="entry name" value="A-D-PHexomutase_CS"/>
</dbReference>
<dbReference type="InterPro" id="IPR005841">
    <property type="entry name" value="Alpha-D-phosphohexomutase_SF"/>
</dbReference>
<dbReference type="InterPro" id="IPR006352">
    <property type="entry name" value="GlmM_bact"/>
</dbReference>
<dbReference type="InterPro" id="IPR050060">
    <property type="entry name" value="Phosphoglucosamine_mutase"/>
</dbReference>
<dbReference type="NCBIfam" id="TIGR01455">
    <property type="entry name" value="glmM"/>
    <property type="match status" value="1"/>
</dbReference>
<dbReference type="NCBIfam" id="NF008139">
    <property type="entry name" value="PRK10887.1"/>
    <property type="match status" value="1"/>
</dbReference>
<dbReference type="PANTHER" id="PTHR42946:SF1">
    <property type="entry name" value="PHOSPHOGLUCOMUTASE (ALPHA-D-GLUCOSE-1,6-BISPHOSPHATE-DEPENDENT)"/>
    <property type="match status" value="1"/>
</dbReference>
<dbReference type="PANTHER" id="PTHR42946">
    <property type="entry name" value="PHOSPHOHEXOSE MUTASE"/>
    <property type="match status" value="1"/>
</dbReference>
<dbReference type="Pfam" id="PF02878">
    <property type="entry name" value="PGM_PMM_I"/>
    <property type="match status" value="1"/>
</dbReference>
<dbReference type="Pfam" id="PF02879">
    <property type="entry name" value="PGM_PMM_II"/>
    <property type="match status" value="1"/>
</dbReference>
<dbReference type="Pfam" id="PF02880">
    <property type="entry name" value="PGM_PMM_III"/>
    <property type="match status" value="1"/>
</dbReference>
<dbReference type="Pfam" id="PF00408">
    <property type="entry name" value="PGM_PMM_IV"/>
    <property type="match status" value="1"/>
</dbReference>
<dbReference type="PRINTS" id="PR00509">
    <property type="entry name" value="PGMPMM"/>
</dbReference>
<dbReference type="SUPFAM" id="SSF55957">
    <property type="entry name" value="Phosphoglucomutase, C-terminal domain"/>
    <property type="match status" value="1"/>
</dbReference>
<dbReference type="SUPFAM" id="SSF53738">
    <property type="entry name" value="Phosphoglucomutase, first 3 domains"/>
    <property type="match status" value="3"/>
</dbReference>
<dbReference type="PROSITE" id="PS00710">
    <property type="entry name" value="PGM_PMM"/>
    <property type="match status" value="1"/>
</dbReference>
<sequence>MSYFGTDGIRGKFGQMPITPEFALKLGFAAGKVLKRTSPKNKPLVVLGKDTRLSGYILESALQAGLNAAGVYVHLLGPLPTPAIAHLTRALHAHAGIVISASHNPYFDNGIKFFSSEGKKLPDSLQEEINKELEKDLFIEDTANLGKSVRVTDANGRYIEFCKSTFPYHFDLNNLKIVVDCAHGAAYSVGPSVFRELGAKVVALYNEPDGLNINENCGSTHPESLQKAVVEHGADLGIAFDGDADRVVMVDKFGNLIDGDHILYILATQAKNKPAGVVGTVMSNMALEVALEKANVGFVRAKVGDRYVLQALEENGWVTGGEPSGHILTLDKSTTGDAIIAALQVLTVMVEQNKALHELVHDFKLYPQVLVNVRLEQMLDPYSIPALVAEFNKAEEQLKGRGRILIRKSGTEPVIRVMVEGDNEQEVKTLAEHLANAVRSQAQVA</sequence>
<keyword id="KW-0413">Isomerase</keyword>
<keyword id="KW-0460">Magnesium</keyword>
<keyword id="KW-0479">Metal-binding</keyword>
<keyword id="KW-0597">Phosphoprotein</keyword>
<protein>
    <recommendedName>
        <fullName evidence="1">Phosphoglucosamine mutase</fullName>
        <ecNumber evidence="1">5.4.2.10</ecNumber>
    </recommendedName>
</protein>
<reference key="1">
    <citation type="journal article" date="2007" name="Genes Dev.">
        <title>New insights into Acinetobacter baumannii pathogenesis revealed by high-density pyrosequencing and transposon mutagenesis.</title>
        <authorList>
            <person name="Smith M.G."/>
            <person name="Gianoulis T.A."/>
            <person name="Pukatzki S."/>
            <person name="Mekalanos J.J."/>
            <person name="Ornston L.N."/>
            <person name="Gerstein M."/>
            <person name="Snyder M."/>
        </authorList>
    </citation>
    <scope>NUCLEOTIDE SEQUENCE [LARGE SCALE GENOMIC DNA]</scope>
    <source>
        <strain>ATCC 17978 / DSM 105126 / CIP 53.77 / LMG 1025 / NCDC KC755 / 5377</strain>
    </source>
</reference>
<gene>
    <name evidence="1" type="primary">glmM</name>
    <name type="ordered locus">A1S_3320</name>
</gene>
<proteinExistence type="inferred from homology"/>
<name>GLMM_ACIBT</name>
<comment type="function">
    <text evidence="1">Catalyzes the conversion of glucosamine-6-phosphate to glucosamine-1-phosphate.</text>
</comment>
<comment type="catalytic activity">
    <reaction evidence="1">
        <text>alpha-D-glucosamine 1-phosphate = D-glucosamine 6-phosphate</text>
        <dbReference type="Rhea" id="RHEA:23424"/>
        <dbReference type="ChEBI" id="CHEBI:58516"/>
        <dbReference type="ChEBI" id="CHEBI:58725"/>
        <dbReference type="EC" id="5.4.2.10"/>
    </reaction>
</comment>
<comment type="cofactor">
    <cofactor evidence="1">
        <name>Mg(2+)</name>
        <dbReference type="ChEBI" id="CHEBI:18420"/>
    </cofactor>
    <text evidence="1">Binds 1 Mg(2+) ion per subunit.</text>
</comment>
<comment type="PTM">
    <text evidence="1">Activated by phosphorylation.</text>
</comment>
<comment type="similarity">
    <text evidence="1">Belongs to the phosphohexose mutase family.</text>
</comment>
<organism>
    <name type="scientific">Acinetobacter baumannii (strain ATCC 17978 / DSM 105126 / CIP 53.77 / LMG 1025 / NCDC KC755 / 5377)</name>
    <dbReference type="NCBI Taxonomy" id="400667"/>
    <lineage>
        <taxon>Bacteria</taxon>
        <taxon>Pseudomonadati</taxon>
        <taxon>Pseudomonadota</taxon>
        <taxon>Gammaproteobacteria</taxon>
        <taxon>Moraxellales</taxon>
        <taxon>Moraxellaceae</taxon>
        <taxon>Acinetobacter</taxon>
        <taxon>Acinetobacter calcoaceticus/baumannii complex</taxon>
    </lineage>
</organism>
<feature type="chain" id="PRO_0000305631" description="Phosphoglucosamine mutase">
    <location>
        <begin position="1"/>
        <end position="445"/>
    </location>
</feature>
<feature type="active site" description="Phosphoserine intermediate" evidence="1">
    <location>
        <position position="102"/>
    </location>
</feature>
<feature type="binding site" description="via phosphate group" evidence="1">
    <location>
        <position position="102"/>
    </location>
    <ligand>
        <name>Mg(2+)</name>
        <dbReference type="ChEBI" id="CHEBI:18420"/>
    </ligand>
</feature>
<feature type="binding site" evidence="1">
    <location>
        <position position="241"/>
    </location>
    <ligand>
        <name>Mg(2+)</name>
        <dbReference type="ChEBI" id="CHEBI:18420"/>
    </ligand>
</feature>
<feature type="binding site" evidence="1">
    <location>
        <position position="243"/>
    </location>
    <ligand>
        <name>Mg(2+)</name>
        <dbReference type="ChEBI" id="CHEBI:18420"/>
    </ligand>
</feature>
<feature type="binding site" evidence="1">
    <location>
        <position position="245"/>
    </location>
    <ligand>
        <name>Mg(2+)</name>
        <dbReference type="ChEBI" id="CHEBI:18420"/>
    </ligand>
</feature>
<feature type="modified residue" description="Phosphoserine" evidence="1">
    <location>
        <position position="102"/>
    </location>
</feature>
<evidence type="ECO:0000255" key="1">
    <source>
        <dbReference type="HAMAP-Rule" id="MF_01554"/>
    </source>
</evidence>